<evidence type="ECO:0000255" key="1">
    <source>
        <dbReference type="PROSITE-ProRule" id="PRU01182"/>
    </source>
</evidence>
<evidence type="ECO:0000256" key="2">
    <source>
        <dbReference type="SAM" id="MobiDB-lite"/>
    </source>
</evidence>
<evidence type="ECO:0000305" key="3"/>
<accession>P65955</accession>
<accession>Q8YHS8</accession>
<keyword id="KW-0378">Hydrolase</keyword>
<keyword id="KW-0479">Metal-binding</keyword>
<keyword id="KW-0482">Metalloprotease</keyword>
<keyword id="KW-0645">Protease</keyword>
<keyword id="KW-0862">Zinc</keyword>
<proteinExistence type="inferred from homology"/>
<comment type="similarity">
    <text evidence="3">Belongs to the UPF0758 family.</text>
</comment>
<dbReference type="EMBL" id="AE008917">
    <property type="protein sequence ID" value="AAL51899.1"/>
    <property type="molecule type" value="Genomic_DNA"/>
</dbReference>
<dbReference type="PIR" id="AH3341">
    <property type="entry name" value="AH3341"/>
</dbReference>
<dbReference type="SMR" id="P65955"/>
<dbReference type="KEGG" id="bme:BMEI0718"/>
<dbReference type="KEGG" id="bmel:DK63_709"/>
<dbReference type="PATRIC" id="fig|224914.52.peg.740"/>
<dbReference type="eggNOG" id="COG2003">
    <property type="taxonomic scope" value="Bacteria"/>
</dbReference>
<dbReference type="PhylomeDB" id="P65955"/>
<dbReference type="Proteomes" id="UP000000419">
    <property type="component" value="Chromosome I"/>
</dbReference>
<dbReference type="GO" id="GO:0046872">
    <property type="term" value="F:metal ion binding"/>
    <property type="evidence" value="ECO:0007669"/>
    <property type="project" value="UniProtKB-KW"/>
</dbReference>
<dbReference type="GO" id="GO:0008237">
    <property type="term" value="F:metallopeptidase activity"/>
    <property type="evidence" value="ECO:0007669"/>
    <property type="project" value="UniProtKB-KW"/>
</dbReference>
<dbReference type="GO" id="GO:0006508">
    <property type="term" value="P:proteolysis"/>
    <property type="evidence" value="ECO:0007669"/>
    <property type="project" value="UniProtKB-KW"/>
</dbReference>
<dbReference type="CDD" id="cd08071">
    <property type="entry name" value="MPN_DUF2466"/>
    <property type="match status" value="1"/>
</dbReference>
<dbReference type="Gene3D" id="1.10.150.20">
    <property type="entry name" value="5' to 3' exonuclease, C-terminal subdomain"/>
    <property type="match status" value="1"/>
</dbReference>
<dbReference type="Gene3D" id="3.40.140.10">
    <property type="entry name" value="Cytidine Deaminase, domain 2"/>
    <property type="match status" value="1"/>
</dbReference>
<dbReference type="InterPro" id="IPR037518">
    <property type="entry name" value="MPN"/>
</dbReference>
<dbReference type="InterPro" id="IPR025657">
    <property type="entry name" value="RadC_JAB"/>
</dbReference>
<dbReference type="InterPro" id="IPR010994">
    <property type="entry name" value="RuvA_2-like"/>
</dbReference>
<dbReference type="InterPro" id="IPR001405">
    <property type="entry name" value="UPF0758"/>
</dbReference>
<dbReference type="InterPro" id="IPR020891">
    <property type="entry name" value="UPF0758_CS"/>
</dbReference>
<dbReference type="NCBIfam" id="NF000642">
    <property type="entry name" value="PRK00024.1"/>
    <property type="match status" value="1"/>
</dbReference>
<dbReference type="NCBIfam" id="TIGR00608">
    <property type="entry name" value="radc"/>
    <property type="match status" value="1"/>
</dbReference>
<dbReference type="PANTHER" id="PTHR30471">
    <property type="entry name" value="DNA REPAIR PROTEIN RADC"/>
    <property type="match status" value="1"/>
</dbReference>
<dbReference type="PANTHER" id="PTHR30471:SF3">
    <property type="entry name" value="UPF0758 PROTEIN YEES-RELATED"/>
    <property type="match status" value="1"/>
</dbReference>
<dbReference type="Pfam" id="PF04002">
    <property type="entry name" value="RadC"/>
    <property type="match status" value="1"/>
</dbReference>
<dbReference type="SUPFAM" id="SSF102712">
    <property type="entry name" value="JAB1/MPN domain"/>
    <property type="match status" value="1"/>
</dbReference>
<dbReference type="SUPFAM" id="SSF47781">
    <property type="entry name" value="RuvA domain 2-like"/>
    <property type="match status" value="1"/>
</dbReference>
<dbReference type="PROSITE" id="PS50249">
    <property type="entry name" value="MPN"/>
    <property type="match status" value="1"/>
</dbReference>
<dbReference type="PROSITE" id="PS01302">
    <property type="entry name" value="UPF0758"/>
    <property type="match status" value="1"/>
</dbReference>
<reference key="1">
    <citation type="journal article" date="2002" name="Proc. Natl. Acad. Sci. U.S.A.">
        <title>The genome sequence of the facultative intracellular pathogen Brucella melitensis.</title>
        <authorList>
            <person name="DelVecchio V.G."/>
            <person name="Kapatral V."/>
            <person name="Redkar R.J."/>
            <person name="Patra G."/>
            <person name="Mujer C."/>
            <person name="Los T."/>
            <person name="Ivanova N."/>
            <person name="Anderson I."/>
            <person name="Bhattacharyya A."/>
            <person name="Lykidis A."/>
            <person name="Reznik G."/>
            <person name="Jablonski L."/>
            <person name="Larsen N."/>
            <person name="D'Souza M."/>
            <person name="Bernal A."/>
            <person name="Mazur M."/>
            <person name="Goltsman E."/>
            <person name="Selkov E."/>
            <person name="Elzer P.H."/>
            <person name="Hagius S."/>
            <person name="O'Callaghan D."/>
            <person name="Letesson J.-J."/>
            <person name="Haselkorn R."/>
            <person name="Kyrpides N.C."/>
            <person name="Overbeek R."/>
        </authorList>
    </citation>
    <scope>NUCLEOTIDE SEQUENCE [LARGE SCALE GENOMIC DNA]</scope>
    <source>
        <strain>ATCC 23456 / CCUG 17765 / NCTC 10094 / 16M</strain>
    </source>
</reference>
<gene>
    <name type="ordered locus">BMEI0718</name>
</gene>
<organism>
    <name type="scientific">Brucella melitensis biotype 1 (strain ATCC 23456 / CCUG 17765 / NCTC 10094 / 16M)</name>
    <dbReference type="NCBI Taxonomy" id="224914"/>
    <lineage>
        <taxon>Bacteria</taxon>
        <taxon>Pseudomonadati</taxon>
        <taxon>Pseudomonadota</taxon>
        <taxon>Alphaproteobacteria</taxon>
        <taxon>Hyphomicrobiales</taxon>
        <taxon>Brucellaceae</taxon>
        <taxon>Brucella/Ochrobactrum group</taxon>
        <taxon>Brucella</taxon>
    </lineage>
</organism>
<protein>
    <recommendedName>
        <fullName>UPF0758 protein BMEI0718</fullName>
    </recommendedName>
</protein>
<sequence length="249" mass="27676">MAKKKDTPGDGEFPGFSDTLQRTPKLEKPHYAGHRDRLKQRFRDAPDALADYELLELLLFRAIRRADTKPIAKALLNRFGSIAEVLAAPENLIAEIPGAGPTVALELKLVEAIAKRSARSTVMEREVLGSWDKVINYCTAAMAFETREQFRILFLDKKNKLIADEVQQTGTVDHTPVYPREVVKRALELSATAIILVHNHPSGDPTPSRADIDMTKQLVNAAKALNITVHDHVIIGKHGHASLRSLRLI</sequence>
<name>Y718_BRUME</name>
<feature type="chain" id="PRO_0000190688" description="UPF0758 protein BMEI0718">
    <location>
        <begin position="1"/>
        <end position="249"/>
    </location>
</feature>
<feature type="domain" description="MPN" evidence="1">
    <location>
        <begin position="127"/>
        <end position="249"/>
    </location>
</feature>
<feature type="region of interest" description="Disordered" evidence="2">
    <location>
        <begin position="1"/>
        <end position="34"/>
    </location>
</feature>
<feature type="short sequence motif" description="JAMM motif" evidence="1">
    <location>
        <begin position="198"/>
        <end position="211"/>
    </location>
</feature>
<feature type="compositionally biased region" description="Basic and acidic residues" evidence="2">
    <location>
        <begin position="24"/>
        <end position="34"/>
    </location>
</feature>
<feature type="binding site" evidence="1">
    <location>
        <position position="198"/>
    </location>
    <ligand>
        <name>Zn(2+)</name>
        <dbReference type="ChEBI" id="CHEBI:29105"/>
        <note>catalytic</note>
    </ligand>
</feature>
<feature type="binding site" evidence="1">
    <location>
        <position position="200"/>
    </location>
    <ligand>
        <name>Zn(2+)</name>
        <dbReference type="ChEBI" id="CHEBI:29105"/>
        <note>catalytic</note>
    </ligand>
</feature>
<feature type="binding site" evidence="1">
    <location>
        <position position="211"/>
    </location>
    <ligand>
        <name>Zn(2+)</name>
        <dbReference type="ChEBI" id="CHEBI:29105"/>
        <note>catalytic</note>
    </ligand>
</feature>